<dbReference type="EC" id="1.14.99.60" evidence="1"/>
<dbReference type="EMBL" id="FM209186">
    <property type="protein sequence ID" value="CAW25361.1"/>
    <property type="molecule type" value="Genomic_DNA"/>
</dbReference>
<dbReference type="RefSeq" id="WP_003085224.1">
    <property type="nucleotide sequence ID" value="NC_011770.1"/>
</dbReference>
<dbReference type="SMR" id="B7V613"/>
<dbReference type="KEGG" id="pag:PLES_06341"/>
<dbReference type="HOGENOM" id="CLU_088601_0_0_6"/>
<dbReference type="UniPathway" id="UPA00232"/>
<dbReference type="GO" id="GO:0005886">
    <property type="term" value="C:plasma membrane"/>
    <property type="evidence" value="ECO:0007669"/>
    <property type="project" value="UniProtKB-SubCell"/>
</dbReference>
<dbReference type="GO" id="GO:0008682">
    <property type="term" value="F:3-demethoxyubiquinol 3-hydroxylase activity"/>
    <property type="evidence" value="ECO:0007669"/>
    <property type="project" value="UniProtKB-EC"/>
</dbReference>
<dbReference type="GO" id="GO:0046872">
    <property type="term" value="F:metal ion binding"/>
    <property type="evidence" value="ECO:0007669"/>
    <property type="project" value="UniProtKB-KW"/>
</dbReference>
<dbReference type="GO" id="GO:0006744">
    <property type="term" value="P:ubiquinone biosynthetic process"/>
    <property type="evidence" value="ECO:0007669"/>
    <property type="project" value="UniProtKB-UniRule"/>
</dbReference>
<dbReference type="CDD" id="cd01042">
    <property type="entry name" value="DMQH"/>
    <property type="match status" value="1"/>
</dbReference>
<dbReference type="FunFam" id="1.20.1260.10:FF:000013">
    <property type="entry name" value="2-nonaprenyl-3-methyl-6-methoxy-1,4-benzoquinol hydroxylase"/>
    <property type="match status" value="1"/>
</dbReference>
<dbReference type="Gene3D" id="1.20.1260.10">
    <property type="match status" value="1"/>
</dbReference>
<dbReference type="HAMAP" id="MF_01658">
    <property type="entry name" value="COQ7"/>
    <property type="match status" value="1"/>
</dbReference>
<dbReference type="InterPro" id="IPR047809">
    <property type="entry name" value="COQ7_proteobact"/>
</dbReference>
<dbReference type="InterPro" id="IPR012347">
    <property type="entry name" value="Ferritin-like"/>
</dbReference>
<dbReference type="InterPro" id="IPR009078">
    <property type="entry name" value="Ferritin-like_SF"/>
</dbReference>
<dbReference type="InterPro" id="IPR011566">
    <property type="entry name" value="Ubq_synth_Coq7"/>
</dbReference>
<dbReference type="NCBIfam" id="NF033656">
    <property type="entry name" value="DMQ_monoox_COQ7"/>
    <property type="match status" value="1"/>
</dbReference>
<dbReference type="PANTHER" id="PTHR11237:SF4">
    <property type="entry name" value="5-DEMETHOXYUBIQUINONE HYDROXYLASE, MITOCHONDRIAL"/>
    <property type="match status" value="1"/>
</dbReference>
<dbReference type="PANTHER" id="PTHR11237">
    <property type="entry name" value="COENZYME Q10 BIOSYNTHESIS PROTEIN 7"/>
    <property type="match status" value="1"/>
</dbReference>
<dbReference type="Pfam" id="PF03232">
    <property type="entry name" value="COQ7"/>
    <property type="match status" value="1"/>
</dbReference>
<dbReference type="SUPFAM" id="SSF47240">
    <property type="entry name" value="Ferritin-like"/>
    <property type="match status" value="1"/>
</dbReference>
<reference key="1">
    <citation type="journal article" date="2009" name="Genome Res.">
        <title>Newly introduced genomic prophage islands are critical determinants of in vivo competitiveness in the Liverpool epidemic strain of Pseudomonas aeruginosa.</title>
        <authorList>
            <person name="Winstanley C."/>
            <person name="Langille M.G.I."/>
            <person name="Fothergill J.L."/>
            <person name="Kukavica-Ibrulj I."/>
            <person name="Paradis-Bleau C."/>
            <person name="Sanschagrin F."/>
            <person name="Thomson N.R."/>
            <person name="Winsor G.L."/>
            <person name="Quail M.A."/>
            <person name="Lennard N."/>
            <person name="Bignell A."/>
            <person name="Clarke L."/>
            <person name="Seeger K."/>
            <person name="Saunders D."/>
            <person name="Harris D."/>
            <person name="Parkhill J."/>
            <person name="Hancock R.E.W."/>
            <person name="Brinkman F.S.L."/>
            <person name="Levesque R.C."/>
        </authorList>
    </citation>
    <scope>NUCLEOTIDE SEQUENCE [LARGE SCALE GENOMIC DNA]</scope>
    <source>
        <strain>LESB58</strain>
    </source>
</reference>
<sequence>MSADRHYSPIDRFLLQADSALRTLLPFSGQPARPSPAIVEPDGELSEEDTRHIAGLMRINHTGEVCAQALYQGQSLTAKLPEVREAMEEAAEEEIDHLAWCEQRIRQLGSRPSVLNPIFYGLSFGVGAAAGLVSDRVSLGFVAATEDQVCKHLDEHLAQIPQEDRKSRAILEQMRIDEEQHSSNALAAGGLRFPAPVKLGMSLLAKVMTKSTYRI</sequence>
<comment type="function">
    <text evidence="1">Catalyzes the hydroxylation of 2-nonaprenyl-3-methyl-6-methoxy-1,4-benzoquinol during ubiquinone biosynthesis.</text>
</comment>
<comment type="catalytic activity">
    <reaction evidence="1">
        <text>a 5-methoxy-2-methyl-3-(all-trans-polyprenyl)benzene-1,4-diol + AH2 + O2 = a 3-demethylubiquinol + A + H2O</text>
        <dbReference type="Rhea" id="RHEA:50908"/>
        <dbReference type="Rhea" id="RHEA-COMP:10859"/>
        <dbReference type="Rhea" id="RHEA-COMP:10914"/>
        <dbReference type="ChEBI" id="CHEBI:13193"/>
        <dbReference type="ChEBI" id="CHEBI:15377"/>
        <dbReference type="ChEBI" id="CHEBI:15379"/>
        <dbReference type="ChEBI" id="CHEBI:17499"/>
        <dbReference type="ChEBI" id="CHEBI:84167"/>
        <dbReference type="ChEBI" id="CHEBI:84422"/>
        <dbReference type="EC" id="1.14.99.60"/>
    </reaction>
</comment>
<comment type="cofactor">
    <cofactor evidence="1">
        <name>Fe cation</name>
        <dbReference type="ChEBI" id="CHEBI:24875"/>
    </cofactor>
    <text evidence="1">Binds 2 iron ions per subunit.</text>
</comment>
<comment type="pathway">
    <text evidence="1">Cofactor biosynthesis; ubiquinone biosynthesis.</text>
</comment>
<comment type="subcellular location">
    <subcellularLocation>
        <location evidence="1">Cell membrane</location>
        <topology evidence="1">Peripheral membrane protein</topology>
    </subcellularLocation>
</comment>
<comment type="similarity">
    <text evidence="1">Belongs to the COQ7 family.</text>
</comment>
<accession>B7V613</accession>
<name>COQ7_PSEA8</name>
<feature type="chain" id="PRO_1000187055" description="3-demethoxyubiquinol 3-hydroxylase">
    <location>
        <begin position="1"/>
        <end position="215"/>
    </location>
</feature>
<feature type="binding site" evidence="1">
    <location>
        <position position="64"/>
    </location>
    <ligand>
        <name>Fe cation</name>
        <dbReference type="ChEBI" id="CHEBI:24875"/>
        <label>1</label>
    </ligand>
</feature>
<feature type="binding site" evidence="1">
    <location>
        <position position="94"/>
    </location>
    <ligand>
        <name>Fe cation</name>
        <dbReference type="ChEBI" id="CHEBI:24875"/>
        <label>1</label>
    </ligand>
</feature>
<feature type="binding site" evidence="1">
    <location>
        <position position="94"/>
    </location>
    <ligand>
        <name>Fe cation</name>
        <dbReference type="ChEBI" id="CHEBI:24875"/>
        <label>2</label>
    </ligand>
</feature>
<feature type="binding site" evidence="1">
    <location>
        <position position="97"/>
    </location>
    <ligand>
        <name>Fe cation</name>
        <dbReference type="ChEBI" id="CHEBI:24875"/>
        <label>1</label>
    </ligand>
</feature>
<feature type="binding site" evidence="1">
    <location>
        <position position="146"/>
    </location>
    <ligand>
        <name>Fe cation</name>
        <dbReference type="ChEBI" id="CHEBI:24875"/>
        <label>2</label>
    </ligand>
</feature>
<feature type="binding site" evidence="1">
    <location>
        <position position="178"/>
    </location>
    <ligand>
        <name>Fe cation</name>
        <dbReference type="ChEBI" id="CHEBI:24875"/>
        <label>1</label>
    </ligand>
</feature>
<feature type="binding site" evidence="1">
    <location>
        <position position="178"/>
    </location>
    <ligand>
        <name>Fe cation</name>
        <dbReference type="ChEBI" id="CHEBI:24875"/>
        <label>2</label>
    </ligand>
</feature>
<feature type="binding site" evidence="1">
    <location>
        <position position="181"/>
    </location>
    <ligand>
        <name>Fe cation</name>
        <dbReference type="ChEBI" id="CHEBI:24875"/>
        <label>2</label>
    </ligand>
</feature>
<proteinExistence type="inferred from homology"/>
<gene>
    <name evidence="1" type="primary">coq7</name>
    <name type="ordered locus">PLES_06341</name>
</gene>
<organism>
    <name type="scientific">Pseudomonas aeruginosa (strain LESB58)</name>
    <dbReference type="NCBI Taxonomy" id="557722"/>
    <lineage>
        <taxon>Bacteria</taxon>
        <taxon>Pseudomonadati</taxon>
        <taxon>Pseudomonadota</taxon>
        <taxon>Gammaproteobacteria</taxon>
        <taxon>Pseudomonadales</taxon>
        <taxon>Pseudomonadaceae</taxon>
        <taxon>Pseudomonas</taxon>
    </lineage>
</organism>
<evidence type="ECO:0000255" key="1">
    <source>
        <dbReference type="HAMAP-Rule" id="MF_01658"/>
    </source>
</evidence>
<protein>
    <recommendedName>
        <fullName evidence="1">3-demethoxyubiquinol 3-hydroxylase</fullName>
        <shortName evidence="1">DMQ hydroxylase</shortName>
        <ecNumber evidence="1">1.14.99.60</ecNumber>
    </recommendedName>
    <alternativeName>
        <fullName evidence="1">2-nonaprenyl-3-methyl-6-methoxy-1,4-benzoquinol hydroxylase</fullName>
    </alternativeName>
</protein>
<keyword id="KW-1003">Cell membrane</keyword>
<keyword id="KW-0408">Iron</keyword>
<keyword id="KW-0472">Membrane</keyword>
<keyword id="KW-0479">Metal-binding</keyword>
<keyword id="KW-0503">Monooxygenase</keyword>
<keyword id="KW-0560">Oxidoreductase</keyword>
<keyword id="KW-0831">Ubiquinone biosynthesis</keyword>